<feature type="chain" id="PRO_1000021059" description="Inner membrane-spanning protein YciB">
    <location>
        <begin position="1"/>
        <end position="181"/>
    </location>
</feature>
<feature type="transmembrane region" description="Helical" evidence="1">
    <location>
        <begin position="10"/>
        <end position="30"/>
    </location>
</feature>
<feature type="transmembrane region" description="Helical" evidence="1">
    <location>
        <begin position="50"/>
        <end position="70"/>
    </location>
</feature>
<feature type="transmembrane region" description="Helical" evidence="1">
    <location>
        <begin position="72"/>
        <end position="92"/>
    </location>
</feature>
<feature type="transmembrane region" description="Helical" evidence="1">
    <location>
        <begin position="118"/>
        <end position="138"/>
    </location>
</feature>
<feature type="transmembrane region" description="Helical" evidence="1">
    <location>
        <begin position="148"/>
        <end position="168"/>
    </location>
</feature>
<accession>A4Y854</accession>
<name>YCIB_SHEPC</name>
<comment type="function">
    <text evidence="1">Plays a role in cell envelope biogenesis, maintenance of cell envelope integrity and membrane homeostasis.</text>
</comment>
<comment type="subcellular location">
    <subcellularLocation>
        <location evidence="1">Cell inner membrane</location>
        <topology evidence="1">Multi-pass membrane protein</topology>
    </subcellularLocation>
</comment>
<comment type="similarity">
    <text evidence="1">Belongs to the YciB family.</text>
</comment>
<dbReference type="EMBL" id="CP000681">
    <property type="protein sequence ID" value="ABP76137.1"/>
    <property type="molecule type" value="Genomic_DNA"/>
</dbReference>
<dbReference type="STRING" id="319224.Sputcn32_2416"/>
<dbReference type="KEGG" id="spc:Sputcn32_2416"/>
<dbReference type="eggNOG" id="COG2917">
    <property type="taxonomic scope" value="Bacteria"/>
</dbReference>
<dbReference type="HOGENOM" id="CLU_089554_2_0_6"/>
<dbReference type="GO" id="GO:0005886">
    <property type="term" value="C:plasma membrane"/>
    <property type="evidence" value="ECO:0007669"/>
    <property type="project" value="UniProtKB-SubCell"/>
</dbReference>
<dbReference type="HAMAP" id="MF_00189">
    <property type="entry name" value="YciB"/>
    <property type="match status" value="1"/>
</dbReference>
<dbReference type="InterPro" id="IPR006008">
    <property type="entry name" value="YciB"/>
</dbReference>
<dbReference type="NCBIfam" id="TIGR00997">
    <property type="entry name" value="ispZ"/>
    <property type="match status" value="1"/>
</dbReference>
<dbReference type="NCBIfam" id="NF001324">
    <property type="entry name" value="PRK00259.1-2"/>
    <property type="match status" value="1"/>
</dbReference>
<dbReference type="NCBIfam" id="NF001325">
    <property type="entry name" value="PRK00259.1-3"/>
    <property type="match status" value="1"/>
</dbReference>
<dbReference type="PANTHER" id="PTHR36917:SF1">
    <property type="entry name" value="INNER MEMBRANE-SPANNING PROTEIN YCIB"/>
    <property type="match status" value="1"/>
</dbReference>
<dbReference type="PANTHER" id="PTHR36917">
    <property type="entry name" value="INTRACELLULAR SEPTATION PROTEIN A-RELATED"/>
    <property type="match status" value="1"/>
</dbReference>
<dbReference type="Pfam" id="PF04279">
    <property type="entry name" value="IspA"/>
    <property type="match status" value="1"/>
</dbReference>
<reference key="1">
    <citation type="submission" date="2007-04" db="EMBL/GenBank/DDBJ databases">
        <title>Complete sequence of Shewanella putrefaciens CN-32.</title>
        <authorList>
            <consortium name="US DOE Joint Genome Institute"/>
            <person name="Copeland A."/>
            <person name="Lucas S."/>
            <person name="Lapidus A."/>
            <person name="Barry K."/>
            <person name="Detter J.C."/>
            <person name="Glavina del Rio T."/>
            <person name="Hammon N."/>
            <person name="Israni S."/>
            <person name="Dalin E."/>
            <person name="Tice H."/>
            <person name="Pitluck S."/>
            <person name="Chain P."/>
            <person name="Malfatti S."/>
            <person name="Shin M."/>
            <person name="Vergez L."/>
            <person name="Schmutz J."/>
            <person name="Larimer F."/>
            <person name="Land M."/>
            <person name="Hauser L."/>
            <person name="Kyrpides N."/>
            <person name="Mikhailova N."/>
            <person name="Romine M.F."/>
            <person name="Fredrickson J."/>
            <person name="Tiedje J."/>
            <person name="Richardson P."/>
        </authorList>
    </citation>
    <scope>NUCLEOTIDE SEQUENCE [LARGE SCALE GENOMIC DNA]</scope>
    <source>
        <strain>CN-32 / ATCC BAA-453</strain>
    </source>
</reference>
<organism>
    <name type="scientific">Shewanella putrefaciens (strain CN-32 / ATCC BAA-453)</name>
    <dbReference type="NCBI Taxonomy" id="319224"/>
    <lineage>
        <taxon>Bacteria</taxon>
        <taxon>Pseudomonadati</taxon>
        <taxon>Pseudomonadota</taxon>
        <taxon>Gammaproteobacteria</taxon>
        <taxon>Alteromonadales</taxon>
        <taxon>Shewanellaceae</taxon>
        <taxon>Shewanella</taxon>
    </lineage>
</organism>
<protein>
    <recommendedName>
        <fullName evidence="1">Inner membrane-spanning protein YciB</fullName>
    </recommendedName>
</protein>
<keyword id="KW-0997">Cell inner membrane</keyword>
<keyword id="KW-1003">Cell membrane</keyword>
<keyword id="KW-0472">Membrane</keyword>
<keyword id="KW-0812">Transmembrane</keyword>
<keyword id="KW-1133">Transmembrane helix</keyword>
<evidence type="ECO:0000255" key="1">
    <source>
        <dbReference type="HAMAP-Rule" id="MF_00189"/>
    </source>
</evidence>
<sequence>MKQLLDFLPLVIFFAVYKFFDIYIASGALIAATALQLIVTYALYKKLEKMHLITFAMVTVFGTLTLVFHDDAFIKWKVTIIYALFALALGISQLLNKSILKSMLGKEMQVADKIWAHITWYWVIFFATCGLVNIYVAFSLPLETWVNFKVFGLTALTLVNTVITVFYLYKHLPEDQRKELK</sequence>
<gene>
    <name evidence="1" type="primary">yciB</name>
    <name type="ordered locus">Sputcn32_2416</name>
</gene>
<proteinExistence type="inferred from homology"/>